<evidence type="ECO:0000250" key="1">
    <source>
        <dbReference type="UniProtKB" id="Q06179"/>
    </source>
</evidence>
<evidence type="ECO:0000250" key="2">
    <source>
        <dbReference type="UniProtKB" id="Q14667"/>
    </source>
</evidence>
<evidence type="ECO:0000250" key="3">
    <source>
        <dbReference type="UniProtKB" id="Q9VZS7"/>
    </source>
</evidence>
<evidence type="ECO:0000255" key="4"/>
<evidence type="ECO:0000256" key="5">
    <source>
        <dbReference type="SAM" id="MobiDB-lite"/>
    </source>
</evidence>
<evidence type="ECO:0000305" key="6"/>
<evidence type="ECO:0007744" key="7">
    <source>
    </source>
</evidence>
<gene>
    <name type="primary">Bltp2</name>
    <name type="synonym">Kiaa0100</name>
</gene>
<feature type="signal peptide" evidence="4">
    <location>
        <begin position="1"/>
        <end position="31"/>
    </location>
</feature>
<feature type="chain" id="PRO_0000248588" description="Bridge-like lipid transfer protein family member 2">
    <location>
        <begin position="32"/>
        <end position="2234"/>
    </location>
</feature>
<feature type="region of interest" description="Transmembrane domain" evidence="3">
    <location>
        <begin position="29"/>
        <end position="108"/>
    </location>
</feature>
<feature type="region of interest" description="Disordered" evidence="5">
    <location>
        <begin position="1496"/>
        <end position="1529"/>
    </location>
</feature>
<feature type="coiled-coil region" evidence="4">
    <location>
        <begin position="1814"/>
        <end position="1885"/>
    </location>
</feature>
<feature type="modified residue" description="Phosphoserine" evidence="7">
    <location>
        <position position="563"/>
    </location>
</feature>
<feature type="modified residue" description="Phosphoserine" evidence="2">
    <location>
        <position position="1846"/>
    </location>
</feature>
<feature type="modified residue" description="Phosphoserine" evidence="2">
    <location>
        <position position="2090"/>
    </location>
</feature>
<feature type="sequence conflict" description="In Ref. 3; AAH75633." evidence="6" ref="3">
    <original>I</original>
    <variation>F</variation>
    <location>
        <position position="68"/>
    </location>
</feature>
<feature type="sequence conflict" description="In Ref. 1; BAC41111." evidence="6" ref="1">
    <original>K</original>
    <variation>E</variation>
    <location>
        <position position="185"/>
    </location>
</feature>
<feature type="sequence conflict" description="In Ref. 1; BAC26370." evidence="6" ref="1">
    <original>L</original>
    <variation>F</variation>
    <location>
        <position position="1416"/>
    </location>
</feature>
<feature type="sequence conflict" description="In Ref. 3; AAH75633." evidence="6" ref="3">
    <original>L</original>
    <variation>F</variation>
    <location>
        <position position="1536"/>
    </location>
</feature>
<feature type="sequence conflict" description="In Ref. 1; BAC41111." evidence="6" ref="1">
    <original>E</original>
    <variation>G</variation>
    <location>
        <position position="1832"/>
    </location>
</feature>
<feature type="sequence conflict" description="In Ref. 3; AAH75633." evidence="6" ref="3">
    <original>Y</original>
    <variation>H</variation>
    <location>
        <position position="2129"/>
    </location>
</feature>
<dbReference type="EMBL" id="AK012059">
    <property type="protein sequence ID" value="BAB28000.1"/>
    <property type="status" value="ALT_INIT"/>
    <property type="molecule type" value="mRNA"/>
</dbReference>
<dbReference type="EMBL" id="AK029280">
    <property type="protein sequence ID" value="BAC26370.1"/>
    <property type="molecule type" value="mRNA"/>
</dbReference>
<dbReference type="EMBL" id="AK090138">
    <property type="protein sequence ID" value="BAC41111.1"/>
    <property type="molecule type" value="mRNA"/>
</dbReference>
<dbReference type="EMBL" id="AK149719">
    <property type="protein sequence ID" value="BAE29046.1"/>
    <property type="molecule type" value="mRNA"/>
</dbReference>
<dbReference type="EMBL" id="AL591070">
    <property type="status" value="NOT_ANNOTATED_CDS"/>
    <property type="molecule type" value="Genomic_DNA"/>
</dbReference>
<dbReference type="EMBL" id="BC040464">
    <property type="protein sequence ID" value="AAH40464.1"/>
    <property type="molecule type" value="mRNA"/>
</dbReference>
<dbReference type="EMBL" id="BC075633">
    <property type="protein sequence ID" value="AAH75633.1"/>
    <property type="molecule type" value="mRNA"/>
</dbReference>
<dbReference type="EMBL" id="BC080706">
    <property type="protein sequence ID" value="AAH80706.1"/>
    <property type="status" value="ALT_SEQ"/>
    <property type="molecule type" value="mRNA"/>
</dbReference>
<dbReference type="EMBL" id="AK122206">
    <property type="protein sequence ID" value="BAC65488.1"/>
    <property type="molecule type" value="mRNA"/>
</dbReference>
<dbReference type="CCDS" id="CCDS25097.1"/>
<dbReference type="RefSeq" id="NP_001002004.2">
    <property type="nucleotide sequence ID" value="NM_001002004.2"/>
</dbReference>
<dbReference type="SMR" id="Q5SYL3"/>
<dbReference type="BioGRID" id="215404">
    <property type="interactions" value="2"/>
</dbReference>
<dbReference type="FunCoup" id="Q5SYL3">
    <property type="interactions" value="451"/>
</dbReference>
<dbReference type="STRING" id="10090.ENSMUSP00000010421"/>
<dbReference type="GlyGen" id="Q5SYL3">
    <property type="glycosylation" value="4 sites, 4 N-linked glycans (4 sites)"/>
</dbReference>
<dbReference type="iPTMnet" id="Q5SYL3"/>
<dbReference type="PhosphoSitePlus" id="Q5SYL3"/>
<dbReference type="SwissPalm" id="Q5SYL3"/>
<dbReference type="PaxDb" id="10090-ENSMUSP00000010421"/>
<dbReference type="PeptideAtlas" id="Q5SYL3"/>
<dbReference type="ProteomicsDB" id="269150"/>
<dbReference type="Antibodypedia" id="51190">
    <property type="antibodies" value="52 antibodies from 20 providers"/>
</dbReference>
<dbReference type="Ensembl" id="ENSMUST00000010421.7">
    <property type="protein sequence ID" value="ENSMUSP00000010421.7"/>
    <property type="gene ID" value="ENSMUSG00000010277.8"/>
</dbReference>
<dbReference type="GeneID" id="72503"/>
<dbReference type="KEGG" id="mmu:72503"/>
<dbReference type="UCSC" id="uc007kir.2">
    <property type="organism name" value="mouse"/>
</dbReference>
<dbReference type="AGR" id="MGI:1919753"/>
<dbReference type="CTD" id="9703"/>
<dbReference type="MGI" id="MGI:1919753">
    <property type="gene designation" value="Bltp2"/>
</dbReference>
<dbReference type="VEuPathDB" id="HostDB:ENSMUSG00000010277"/>
<dbReference type="eggNOG" id="KOG1910">
    <property type="taxonomic scope" value="Eukaryota"/>
</dbReference>
<dbReference type="GeneTree" id="ENSGT00600000084481"/>
<dbReference type="HOGENOM" id="CLU_000926_1_0_1"/>
<dbReference type="InParanoid" id="Q5SYL3"/>
<dbReference type="OMA" id="WASFETK"/>
<dbReference type="OrthoDB" id="1562405at2759"/>
<dbReference type="PhylomeDB" id="Q5SYL3"/>
<dbReference type="TreeFam" id="TF314307"/>
<dbReference type="BioGRID-ORCS" id="72503">
    <property type="hits" value="10 hits in 80 CRISPR screens"/>
</dbReference>
<dbReference type="ChiTaRS" id="2610507B11Rik">
    <property type="organism name" value="mouse"/>
</dbReference>
<dbReference type="PRO" id="PR:Q5SYL3"/>
<dbReference type="Proteomes" id="UP000000589">
    <property type="component" value="Chromosome 11"/>
</dbReference>
<dbReference type="RNAct" id="Q5SYL3">
    <property type="molecule type" value="protein"/>
</dbReference>
<dbReference type="Bgee" id="ENSMUSG00000010277">
    <property type="expression patterns" value="Expressed in vestibular membrane of cochlear duct and 285 other cell types or tissues"/>
</dbReference>
<dbReference type="ExpressionAtlas" id="Q5SYL3">
    <property type="expression patterns" value="baseline and differential"/>
</dbReference>
<dbReference type="GO" id="GO:0005789">
    <property type="term" value="C:endoplasmic reticulum membrane"/>
    <property type="evidence" value="ECO:0007669"/>
    <property type="project" value="UniProtKB-SubCell"/>
</dbReference>
<dbReference type="GO" id="GO:0140268">
    <property type="term" value="C:endoplasmic reticulum-plasma membrane contact site"/>
    <property type="evidence" value="ECO:0000250"/>
    <property type="project" value="UniProtKB"/>
</dbReference>
<dbReference type="GO" id="GO:0031966">
    <property type="term" value="C:mitochondrial membrane"/>
    <property type="evidence" value="ECO:0007669"/>
    <property type="project" value="UniProtKB-SubCell"/>
</dbReference>
<dbReference type="GO" id="GO:0005886">
    <property type="term" value="C:plasma membrane"/>
    <property type="evidence" value="ECO:0007669"/>
    <property type="project" value="UniProtKB-SubCell"/>
</dbReference>
<dbReference type="GO" id="GO:0035091">
    <property type="term" value="F:phosphatidylinositol binding"/>
    <property type="evidence" value="ECO:0000250"/>
    <property type="project" value="UniProtKB"/>
</dbReference>
<dbReference type="InterPro" id="IPR019441">
    <property type="entry name" value="FMP27/BLTP2/Hobbit_GFWDK_RBG"/>
</dbReference>
<dbReference type="InterPro" id="IPR045167">
    <property type="entry name" value="Hobbit"/>
</dbReference>
<dbReference type="PANTHER" id="PTHR15678">
    <property type="entry name" value="ANTIGEN MLAA-22-RELATED"/>
    <property type="match status" value="1"/>
</dbReference>
<dbReference type="PANTHER" id="PTHR15678:SF6">
    <property type="entry name" value="BRIDGE-LIKE LIPID TRANSFER PROTEIN FAMILY MEMBER 2"/>
    <property type="match status" value="1"/>
</dbReference>
<dbReference type="Pfam" id="PF10344">
    <property type="entry name" value="Hobbit"/>
    <property type="match status" value="1"/>
</dbReference>
<dbReference type="SMART" id="SM01214">
    <property type="entry name" value="Fmp27_GFWDK"/>
    <property type="match status" value="1"/>
</dbReference>
<name>BLTP2_MOUSE</name>
<organism>
    <name type="scientific">Mus musculus</name>
    <name type="common">Mouse</name>
    <dbReference type="NCBI Taxonomy" id="10090"/>
    <lineage>
        <taxon>Eukaryota</taxon>
        <taxon>Metazoa</taxon>
        <taxon>Chordata</taxon>
        <taxon>Craniata</taxon>
        <taxon>Vertebrata</taxon>
        <taxon>Euteleostomi</taxon>
        <taxon>Mammalia</taxon>
        <taxon>Eutheria</taxon>
        <taxon>Euarchontoglires</taxon>
        <taxon>Glires</taxon>
        <taxon>Rodentia</taxon>
        <taxon>Myomorpha</taxon>
        <taxon>Muroidea</taxon>
        <taxon>Muridae</taxon>
        <taxon>Murinae</taxon>
        <taxon>Mus</taxon>
        <taxon>Mus</taxon>
    </lineage>
</organism>
<comment type="function">
    <text evidence="3">Tube-forming lipid transport protein which binds to phosphatidylinositols and affects phosphatidylinositol-4,5-bisphosphate (PtdIns-4,5-P2) distribution.</text>
</comment>
<comment type="subcellular location">
    <subcellularLocation>
        <location evidence="3">Cell membrane</location>
    </subcellularLocation>
    <subcellularLocation>
        <location evidence="3">Endoplasmic reticulum membrane</location>
    </subcellularLocation>
    <subcellularLocation>
        <location evidence="1">Mitochondrion membrane</location>
    </subcellularLocation>
    <text evidence="3">Localizes to endoplasmic reticulum-cell membrane and some endoplasmic reticulum-mitochondria contact sites.</text>
</comment>
<comment type="similarity">
    <text evidence="6">Belongs to the SABRE family.</text>
</comment>
<comment type="sequence caution" evidence="6">
    <conflict type="miscellaneous discrepancy">
        <sequence resource="EMBL-CDS" id="AAH80706"/>
    </conflict>
    <text>Contaminating sequence. Potential poly-A sequence.</text>
</comment>
<comment type="sequence caution" evidence="6">
    <conflict type="erroneous initiation">
        <sequence resource="EMBL-CDS" id="BAB28000"/>
    </conflict>
    <text>Truncated N-terminus.</text>
</comment>
<keyword id="KW-1003">Cell membrane</keyword>
<keyword id="KW-0175">Coiled coil</keyword>
<keyword id="KW-0256">Endoplasmic reticulum</keyword>
<keyword id="KW-0472">Membrane</keyword>
<keyword id="KW-0496">Mitochondrion</keyword>
<keyword id="KW-0597">Phosphoprotein</keyword>
<keyword id="KW-1185">Reference proteome</keyword>
<keyword id="KW-0732">Signal</keyword>
<proteinExistence type="evidence at protein level"/>
<protein>
    <recommendedName>
        <fullName>Bridge-like lipid transfer protein family member 2</fullName>
    </recommendedName>
    <alternativeName>
        <fullName>Protein KIAA0100</fullName>
    </alternativeName>
</protein>
<sequence>MPLFLSALLVLLLVALSALFLGRWLVVRLATRWCQRKLQAELKIGSFRFFWIQNVSLKFQQHQQTVEIDNLWISSKLLSHDLPNYVALCFGEVRIRTDLQKVSSLSAPFSQNTEVEQKELSLSPSLLKIFCQLFSIHVDAINIMVLKVATSESLWHIQISRSRFLLDSDGKSLICKVNLSKINSKVLKSGQLEDTCLVELSLALDLRLQVSVSSWHLTAVTVDVWTLHAELHEGLFHSQLLCHAPGRISKSVSCSDLTENFAEPTLPGLYLLQRLPDQVKVKMENTSVVLSMNSQKRHLTWTLKLLHFLYHRDEDQLPLRSFTANYDMAQMSTELLLEDGLLLSQSRQRIVCLNSLKANVQVTTIDLSASLVLNTCIIHYRHQEFSHWLLMLALETQGASSPDLKQRKKRTFPQILAPIIFSTSVSNVSISIQLGDTPPFALGFNSISLDYQHLRPQSIHQRAVLTVDHLCWRVGSDSHIQRAPHPPNMHVWGEALVLDSFTLQGSYNQPLGLSSTQSNTLFLDCTIRGLQVEISDICAQCLSRVLSLVIPQSERSAVSRKSSLGESVTLLWKVDLKVEDMNLFTLSALVGASELRLDTLTVLGSAETSTVGIQGLVLALVKSVTEKMQPCCKAPDIPTPVLGLSMLSLTYHSSIRSLEVQCGAGLTLLWSPPDHMYLYQHVRATLQCRDLLRATVFPEIIESHSLNTPQSTWEPEDHLPESSLPRRLLTLTLEVSTAKLTAFVAEDKFITLAAESVSLNRHGGSLQAYCPELAAGFDGNSIFNLKEVEVQLLPELEEMILHRNPFPALQTLRNRVWLLSLGSVSVEFPYQYDFSRTLDEAVGVQKWLKGLHRGTHAWASPSPAPLPPDLLLKVQHFSWVFLDDIFEVKLHDNYELMKDESKESAKRLQLLDAKVAALRKQHGELLPARKIEELYASLERKNIEIYIQRSRRLYGNTPMRRALLTWSLAGLELVALADASFHGPEHVIEQVRELDPGSPFPAEGMDLVTQWCRMLKCNVKTFLVRIRDYPRYLFEIRDWRLMGRLAGTEQSGQPCSRRRQILHLGLPWGNVAVERNMPPLKFYHDFHSEIFQYTVVWGPCWDPAWTLIGQCVDLLTKPSADPSPPLPWWDKSRLLFHGDWHMDIEQANLHQLATEDPYNTTENMHWEWSHLSFHWKPGQFVFRGDLDVNVRTASKYDDCCFLHLPDLCMTLDLQWLCHGNPHDHHSVTLRAPEFLPEVPLGQLHDSYRAFRSENLNLSIKMDLTRHSGTISQPRILVYSSTLRWMQNFWATWTSITRPICRGKLFNNLKPSKKKLGQHYKQLSYTALFPQLQVHYWASFAQQRGIQIECSQGHVFTRGTQRLIPQAGTVMRRLISEWSVTQMVSDLSQVTVHLMASPTEENADHCLDPLITKTHLLSLSSLTYQRHSNRTTEEELSARDGDPAFHTHQLYLVDLRISWTTTNRDIAFGLYDGYKKAAVLKRNLSTEALKGLKIDPQMSAKKPKRGIPPSAQVPPHVSTPSFSGRPDKGSSGGAYMLQKLIEETDRFVVFTEEESGMSDQLCGIAACQTDDIYNRNCLIELVNCQMVLRGAETEGCVIVSAAKAQLLQCQHHPAWYGDTLKQKTSWTCLLDGMQYFATTESSPTEQDGRQLWLEVKNIEEHRERSLDSVQELMESGQAVGGMVTTTTDWNQPAEAQQAQQVQRIISRCNCRMYYISYSHDIDPELATQIKPPEVHENQEKEDLLKKQEGAVDTFTLIHHELEISTNPAQYAMILDIVNNLLLHVEPKRKEHSEKKQRVRFQLEISSNPEEQRSSILHLQEAVRQHVAQIRHLEKQMYSIMKSLQDDSKNENLLDLNQKLQLQLNQEKANLQLESEELNILIRCFKDFQLQRANKMELRKQQEDVSVVRRTEFYFAQARWRLTEEDGQLGIAELELQRFLYSKVNKSDDTAEHLLELGWFTMNNLLPNAIYKVVLRPQSSCQSGRQLALRLFSKVRPPVGGISVKEHFEVNVVPLTIQLSHRFFHRMMGFFFPGRNVEDDEVGDEEDKSKLVTTGIPVVKPRQLIATDDAVPLGSGKGVAQGLTRSSGVRRSFRKLPEHPVDDIDKMKERAAMNNSFIYIKIPQVPLCVSYKGEKNSVDWGDLNLVLPCLEYHNNTWTWLDFAMAVKRDSRKALVAQVIKEKLRLKPATGSEVRGKLETKCDLNMQQQEEEKARLLIGLSVGDKNPGKKSIFGRRK</sequence>
<reference key="1">
    <citation type="journal article" date="2005" name="Science">
        <title>The transcriptional landscape of the mammalian genome.</title>
        <authorList>
            <person name="Carninci P."/>
            <person name="Kasukawa T."/>
            <person name="Katayama S."/>
            <person name="Gough J."/>
            <person name="Frith M.C."/>
            <person name="Maeda N."/>
            <person name="Oyama R."/>
            <person name="Ravasi T."/>
            <person name="Lenhard B."/>
            <person name="Wells C."/>
            <person name="Kodzius R."/>
            <person name="Shimokawa K."/>
            <person name="Bajic V.B."/>
            <person name="Brenner S.E."/>
            <person name="Batalov S."/>
            <person name="Forrest A.R."/>
            <person name="Zavolan M."/>
            <person name="Davis M.J."/>
            <person name="Wilming L.G."/>
            <person name="Aidinis V."/>
            <person name="Allen J.E."/>
            <person name="Ambesi-Impiombato A."/>
            <person name="Apweiler R."/>
            <person name="Aturaliya R.N."/>
            <person name="Bailey T.L."/>
            <person name="Bansal M."/>
            <person name="Baxter L."/>
            <person name="Beisel K.W."/>
            <person name="Bersano T."/>
            <person name="Bono H."/>
            <person name="Chalk A.M."/>
            <person name="Chiu K.P."/>
            <person name="Choudhary V."/>
            <person name="Christoffels A."/>
            <person name="Clutterbuck D.R."/>
            <person name="Crowe M.L."/>
            <person name="Dalla E."/>
            <person name="Dalrymple B.P."/>
            <person name="de Bono B."/>
            <person name="Della Gatta G."/>
            <person name="di Bernardo D."/>
            <person name="Down T."/>
            <person name="Engstrom P."/>
            <person name="Fagiolini M."/>
            <person name="Faulkner G."/>
            <person name="Fletcher C.F."/>
            <person name="Fukushima T."/>
            <person name="Furuno M."/>
            <person name="Futaki S."/>
            <person name="Gariboldi M."/>
            <person name="Georgii-Hemming P."/>
            <person name="Gingeras T.R."/>
            <person name="Gojobori T."/>
            <person name="Green R.E."/>
            <person name="Gustincich S."/>
            <person name="Harbers M."/>
            <person name="Hayashi Y."/>
            <person name="Hensch T.K."/>
            <person name="Hirokawa N."/>
            <person name="Hill D."/>
            <person name="Huminiecki L."/>
            <person name="Iacono M."/>
            <person name="Ikeo K."/>
            <person name="Iwama A."/>
            <person name="Ishikawa T."/>
            <person name="Jakt M."/>
            <person name="Kanapin A."/>
            <person name="Katoh M."/>
            <person name="Kawasawa Y."/>
            <person name="Kelso J."/>
            <person name="Kitamura H."/>
            <person name="Kitano H."/>
            <person name="Kollias G."/>
            <person name="Krishnan S.P."/>
            <person name="Kruger A."/>
            <person name="Kummerfeld S.K."/>
            <person name="Kurochkin I.V."/>
            <person name="Lareau L.F."/>
            <person name="Lazarevic D."/>
            <person name="Lipovich L."/>
            <person name="Liu J."/>
            <person name="Liuni S."/>
            <person name="McWilliam S."/>
            <person name="Madan Babu M."/>
            <person name="Madera M."/>
            <person name="Marchionni L."/>
            <person name="Matsuda H."/>
            <person name="Matsuzawa S."/>
            <person name="Miki H."/>
            <person name="Mignone F."/>
            <person name="Miyake S."/>
            <person name="Morris K."/>
            <person name="Mottagui-Tabar S."/>
            <person name="Mulder N."/>
            <person name="Nakano N."/>
            <person name="Nakauchi H."/>
            <person name="Ng P."/>
            <person name="Nilsson R."/>
            <person name="Nishiguchi S."/>
            <person name="Nishikawa S."/>
            <person name="Nori F."/>
            <person name="Ohara O."/>
            <person name="Okazaki Y."/>
            <person name="Orlando V."/>
            <person name="Pang K.C."/>
            <person name="Pavan W.J."/>
            <person name="Pavesi G."/>
            <person name="Pesole G."/>
            <person name="Petrovsky N."/>
            <person name="Piazza S."/>
            <person name="Reed J."/>
            <person name="Reid J.F."/>
            <person name="Ring B.Z."/>
            <person name="Ringwald M."/>
            <person name="Rost B."/>
            <person name="Ruan Y."/>
            <person name="Salzberg S.L."/>
            <person name="Sandelin A."/>
            <person name="Schneider C."/>
            <person name="Schoenbach C."/>
            <person name="Sekiguchi K."/>
            <person name="Semple C.A."/>
            <person name="Seno S."/>
            <person name="Sessa L."/>
            <person name="Sheng Y."/>
            <person name="Shibata Y."/>
            <person name="Shimada H."/>
            <person name="Shimada K."/>
            <person name="Silva D."/>
            <person name="Sinclair B."/>
            <person name="Sperling S."/>
            <person name="Stupka E."/>
            <person name="Sugiura K."/>
            <person name="Sultana R."/>
            <person name="Takenaka Y."/>
            <person name="Taki K."/>
            <person name="Tammoja K."/>
            <person name="Tan S.L."/>
            <person name="Tang S."/>
            <person name="Taylor M.S."/>
            <person name="Tegner J."/>
            <person name="Teichmann S.A."/>
            <person name="Ueda H.R."/>
            <person name="van Nimwegen E."/>
            <person name="Verardo R."/>
            <person name="Wei C.L."/>
            <person name="Yagi K."/>
            <person name="Yamanishi H."/>
            <person name="Zabarovsky E."/>
            <person name="Zhu S."/>
            <person name="Zimmer A."/>
            <person name="Hide W."/>
            <person name="Bult C."/>
            <person name="Grimmond S.M."/>
            <person name="Teasdale R.D."/>
            <person name="Liu E.T."/>
            <person name="Brusic V."/>
            <person name="Quackenbush J."/>
            <person name="Wahlestedt C."/>
            <person name="Mattick J.S."/>
            <person name="Hume D.A."/>
            <person name="Kai C."/>
            <person name="Sasaki D."/>
            <person name="Tomaru Y."/>
            <person name="Fukuda S."/>
            <person name="Kanamori-Katayama M."/>
            <person name="Suzuki M."/>
            <person name="Aoki J."/>
            <person name="Arakawa T."/>
            <person name="Iida J."/>
            <person name="Imamura K."/>
            <person name="Itoh M."/>
            <person name="Kato T."/>
            <person name="Kawaji H."/>
            <person name="Kawagashira N."/>
            <person name="Kawashima T."/>
            <person name="Kojima M."/>
            <person name="Kondo S."/>
            <person name="Konno H."/>
            <person name="Nakano K."/>
            <person name="Ninomiya N."/>
            <person name="Nishio T."/>
            <person name="Okada M."/>
            <person name="Plessy C."/>
            <person name="Shibata K."/>
            <person name="Shiraki T."/>
            <person name="Suzuki S."/>
            <person name="Tagami M."/>
            <person name="Waki K."/>
            <person name="Watahiki A."/>
            <person name="Okamura-Oho Y."/>
            <person name="Suzuki H."/>
            <person name="Kawai J."/>
            <person name="Hayashizaki Y."/>
        </authorList>
    </citation>
    <scope>NUCLEOTIDE SEQUENCE [LARGE SCALE MRNA]</scope>
    <source>
        <strain>C57BL/6J</strain>
        <tissue>Bone marrow</tissue>
        <tissue>Embryo</tissue>
        <tissue>Head</tissue>
    </source>
</reference>
<reference key="2">
    <citation type="journal article" date="2009" name="PLoS Biol.">
        <title>Lineage-specific biology revealed by a finished genome assembly of the mouse.</title>
        <authorList>
            <person name="Church D.M."/>
            <person name="Goodstadt L."/>
            <person name="Hillier L.W."/>
            <person name="Zody M.C."/>
            <person name="Goldstein S."/>
            <person name="She X."/>
            <person name="Bult C.J."/>
            <person name="Agarwala R."/>
            <person name="Cherry J.L."/>
            <person name="DiCuccio M."/>
            <person name="Hlavina W."/>
            <person name="Kapustin Y."/>
            <person name="Meric P."/>
            <person name="Maglott D."/>
            <person name="Birtle Z."/>
            <person name="Marques A.C."/>
            <person name="Graves T."/>
            <person name="Zhou S."/>
            <person name="Teague B."/>
            <person name="Potamousis K."/>
            <person name="Churas C."/>
            <person name="Place M."/>
            <person name="Herschleb J."/>
            <person name="Runnheim R."/>
            <person name="Forrest D."/>
            <person name="Amos-Landgraf J."/>
            <person name="Schwartz D.C."/>
            <person name="Cheng Z."/>
            <person name="Lindblad-Toh K."/>
            <person name="Eichler E.E."/>
            <person name="Ponting C.P."/>
        </authorList>
    </citation>
    <scope>NUCLEOTIDE SEQUENCE [LARGE SCALE GENOMIC DNA]</scope>
    <source>
        <strain>C57BL/6J</strain>
    </source>
</reference>
<reference key="3">
    <citation type="journal article" date="2004" name="Genome Res.">
        <title>The status, quality, and expansion of the NIH full-length cDNA project: the Mammalian Gene Collection (MGC).</title>
        <authorList>
            <consortium name="The MGC Project Team"/>
        </authorList>
    </citation>
    <scope>NUCLEOTIDE SEQUENCE [LARGE SCALE MRNA]</scope>
    <source>
        <strain>C57BL/6J</strain>
        <strain>FVB/N</strain>
        <tissue>Brain</tissue>
        <tissue>Mammary gland</tissue>
    </source>
</reference>
<reference key="4">
    <citation type="journal article" date="2003" name="DNA Res.">
        <title>Prediction of the coding sequences of mouse homologues of KIAA gene: II. The complete nucleotide sequences of 400 mouse KIAA-homologous cDNAs identified by screening of terminal sequences of cDNA clones randomly sampled from size-fractionated libraries.</title>
        <authorList>
            <person name="Okazaki N."/>
            <person name="Kikuno R."/>
            <person name="Ohara R."/>
            <person name="Inamoto S."/>
            <person name="Aizawa H."/>
            <person name="Yuasa S."/>
            <person name="Nakajima D."/>
            <person name="Nagase T."/>
            <person name="Ohara O."/>
            <person name="Koga H."/>
        </authorList>
    </citation>
    <scope>NUCLEOTIDE SEQUENCE [LARGE SCALE MRNA] OF 752-2234</scope>
    <source>
        <tissue>Brain</tissue>
    </source>
</reference>
<reference key="5">
    <citation type="journal article" date="2010" name="Cell">
        <title>A tissue-specific atlas of mouse protein phosphorylation and expression.</title>
        <authorList>
            <person name="Huttlin E.L."/>
            <person name="Jedrychowski M.P."/>
            <person name="Elias J.E."/>
            <person name="Goswami T."/>
            <person name="Rad R."/>
            <person name="Beausoleil S.A."/>
            <person name="Villen J."/>
            <person name="Haas W."/>
            <person name="Sowa M.E."/>
            <person name="Gygi S.P."/>
        </authorList>
    </citation>
    <scope>PHOSPHORYLATION [LARGE SCALE ANALYSIS] AT SER-563</scope>
    <scope>IDENTIFICATION BY MASS SPECTROMETRY [LARGE SCALE ANALYSIS]</scope>
    <source>
        <tissue>Brain</tissue>
        <tissue>Heart</tissue>
        <tissue>Kidney</tissue>
        <tissue>Lung</tissue>
        <tissue>Testis</tissue>
    </source>
</reference>
<accession>Q5SYL3</accession>
<accession>Q3UE65</accession>
<accession>Q66JY1</accession>
<accession>Q6DIC4</accession>
<accession>Q80U77</accession>
<accession>Q8C1W6</accession>
<accession>Q8CE06</accession>
<accession>Q8CGE3</accession>
<accession>Q9CSS8</accession>